<accession>Q8R2P1</accession>
<name>KLH25_MOUSE</name>
<keyword id="KW-0880">Kelch repeat</keyword>
<keyword id="KW-1185">Reference proteome</keyword>
<keyword id="KW-0677">Repeat</keyword>
<keyword id="KW-0810">Translation regulation</keyword>
<keyword id="KW-0833">Ubl conjugation pathway</keyword>
<reference key="1">
    <citation type="journal article" date="2005" name="Science">
        <title>The transcriptional landscape of the mammalian genome.</title>
        <authorList>
            <person name="Carninci P."/>
            <person name="Kasukawa T."/>
            <person name="Katayama S."/>
            <person name="Gough J."/>
            <person name="Frith M.C."/>
            <person name="Maeda N."/>
            <person name="Oyama R."/>
            <person name="Ravasi T."/>
            <person name="Lenhard B."/>
            <person name="Wells C."/>
            <person name="Kodzius R."/>
            <person name="Shimokawa K."/>
            <person name="Bajic V.B."/>
            <person name="Brenner S.E."/>
            <person name="Batalov S."/>
            <person name="Forrest A.R."/>
            <person name="Zavolan M."/>
            <person name="Davis M.J."/>
            <person name="Wilming L.G."/>
            <person name="Aidinis V."/>
            <person name="Allen J.E."/>
            <person name="Ambesi-Impiombato A."/>
            <person name="Apweiler R."/>
            <person name="Aturaliya R.N."/>
            <person name="Bailey T.L."/>
            <person name="Bansal M."/>
            <person name="Baxter L."/>
            <person name="Beisel K.W."/>
            <person name="Bersano T."/>
            <person name="Bono H."/>
            <person name="Chalk A.M."/>
            <person name="Chiu K.P."/>
            <person name="Choudhary V."/>
            <person name="Christoffels A."/>
            <person name="Clutterbuck D.R."/>
            <person name="Crowe M.L."/>
            <person name="Dalla E."/>
            <person name="Dalrymple B.P."/>
            <person name="de Bono B."/>
            <person name="Della Gatta G."/>
            <person name="di Bernardo D."/>
            <person name="Down T."/>
            <person name="Engstrom P."/>
            <person name="Fagiolini M."/>
            <person name="Faulkner G."/>
            <person name="Fletcher C.F."/>
            <person name="Fukushima T."/>
            <person name="Furuno M."/>
            <person name="Futaki S."/>
            <person name="Gariboldi M."/>
            <person name="Georgii-Hemming P."/>
            <person name="Gingeras T.R."/>
            <person name="Gojobori T."/>
            <person name="Green R.E."/>
            <person name="Gustincich S."/>
            <person name="Harbers M."/>
            <person name="Hayashi Y."/>
            <person name="Hensch T.K."/>
            <person name="Hirokawa N."/>
            <person name="Hill D."/>
            <person name="Huminiecki L."/>
            <person name="Iacono M."/>
            <person name="Ikeo K."/>
            <person name="Iwama A."/>
            <person name="Ishikawa T."/>
            <person name="Jakt M."/>
            <person name="Kanapin A."/>
            <person name="Katoh M."/>
            <person name="Kawasawa Y."/>
            <person name="Kelso J."/>
            <person name="Kitamura H."/>
            <person name="Kitano H."/>
            <person name="Kollias G."/>
            <person name="Krishnan S.P."/>
            <person name="Kruger A."/>
            <person name="Kummerfeld S.K."/>
            <person name="Kurochkin I.V."/>
            <person name="Lareau L.F."/>
            <person name="Lazarevic D."/>
            <person name="Lipovich L."/>
            <person name="Liu J."/>
            <person name="Liuni S."/>
            <person name="McWilliam S."/>
            <person name="Madan Babu M."/>
            <person name="Madera M."/>
            <person name="Marchionni L."/>
            <person name="Matsuda H."/>
            <person name="Matsuzawa S."/>
            <person name="Miki H."/>
            <person name="Mignone F."/>
            <person name="Miyake S."/>
            <person name="Morris K."/>
            <person name="Mottagui-Tabar S."/>
            <person name="Mulder N."/>
            <person name="Nakano N."/>
            <person name="Nakauchi H."/>
            <person name="Ng P."/>
            <person name="Nilsson R."/>
            <person name="Nishiguchi S."/>
            <person name="Nishikawa S."/>
            <person name="Nori F."/>
            <person name="Ohara O."/>
            <person name="Okazaki Y."/>
            <person name="Orlando V."/>
            <person name="Pang K.C."/>
            <person name="Pavan W.J."/>
            <person name="Pavesi G."/>
            <person name="Pesole G."/>
            <person name="Petrovsky N."/>
            <person name="Piazza S."/>
            <person name="Reed J."/>
            <person name="Reid J.F."/>
            <person name="Ring B.Z."/>
            <person name="Ringwald M."/>
            <person name="Rost B."/>
            <person name="Ruan Y."/>
            <person name="Salzberg S.L."/>
            <person name="Sandelin A."/>
            <person name="Schneider C."/>
            <person name="Schoenbach C."/>
            <person name="Sekiguchi K."/>
            <person name="Semple C.A."/>
            <person name="Seno S."/>
            <person name="Sessa L."/>
            <person name="Sheng Y."/>
            <person name="Shibata Y."/>
            <person name="Shimada H."/>
            <person name="Shimada K."/>
            <person name="Silva D."/>
            <person name="Sinclair B."/>
            <person name="Sperling S."/>
            <person name="Stupka E."/>
            <person name="Sugiura K."/>
            <person name="Sultana R."/>
            <person name="Takenaka Y."/>
            <person name="Taki K."/>
            <person name="Tammoja K."/>
            <person name="Tan S.L."/>
            <person name="Tang S."/>
            <person name="Taylor M.S."/>
            <person name="Tegner J."/>
            <person name="Teichmann S.A."/>
            <person name="Ueda H.R."/>
            <person name="van Nimwegen E."/>
            <person name="Verardo R."/>
            <person name="Wei C.L."/>
            <person name="Yagi K."/>
            <person name="Yamanishi H."/>
            <person name="Zabarovsky E."/>
            <person name="Zhu S."/>
            <person name="Zimmer A."/>
            <person name="Hide W."/>
            <person name="Bult C."/>
            <person name="Grimmond S.M."/>
            <person name="Teasdale R.D."/>
            <person name="Liu E.T."/>
            <person name="Brusic V."/>
            <person name="Quackenbush J."/>
            <person name="Wahlestedt C."/>
            <person name="Mattick J.S."/>
            <person name="Hume D.A."/>
            <person name="Kai C."/>
            <person name="Sasaki D."/>
            <person name="Tomaru Y."/>
            <person name="Fukuda S."/>
            <person name="Kanamori-Katayama M."/>
            <person name="Suzuki M."/>
            <person name="Aoki J."/>
            <person name="Arakawa T."/>
            <person name="Iida J."/>
            <person name="Imamura K."/>
            <person name="Itoh M."/>
            <person name="Kato T."/>
            <person name="Kawaji H."/>
            <person name="Kawagashira N."/>
            <person name="Kawashima T."/>
            <person name="Kojima M."/>
            <person name="Kondo S."/>
            <person name="Konno H."/>
            <person name="Nakano K."/>
            <person name="Ninomiya N."/>
            <person name="Nishio T."/>
            <person name="Okada M."/>
            <person name="Plessy C."/>
            <person name="Shibata K."/>
            <person name="Shiraki T."/>
            <person name="Suzuki S."/>
            <person name="Tagami M."/>
            <person name="Waki K."/>
            <person name="Watahiki A."/>
            <person name="Okamura-Oho Y."/>
            <person name="Suzuki H."/>
            <person name="Kawai J."/>
            <person name="Hayashizaki Y."/>
        </authorList>
    </citation>
    <scope>NUCLEOTIDE SEQUENCE [LARGE SCALE MRNA]</scope>
    <source>
        <strain>C57BL/6J</strain>
        <tissue>Eye</tissue>
    </source>
</reference>
<reference key="2">
    <citation type="journal article" date="2004" name="Genome Res.">
        <title>The status, quality, and expansion of the NIH full-length cDNA project: the Mammalian Gene Collection (MGC).</title>
        <authorList>
            <consortium name="The MGC Project Team"/>
        </authorList>
    </citation>
    <scope>NUCLEOTIDE SEQUENCE [LARGE SCALE MRNA]</scope>
    <source>
        <strain>FVB/N</strain>
        <tissue>Mammary tumor</tissue>
    </source>
</reference>
<reference key="3">
    <citation type="journal article" date="2012" name="Mol. Cell">
        <title>Translational homeostasis via the mRNA cap-binding protein, eIF4E.</title>
        <authorList>
            <person name="Yanagiya A."/>
            <person name="Suyama E."/>
            <person name="Adachi H."/>
            <person name="Svitkin Y.V."/>
            <person name="Aza-Blanc P."/>
            <person name="Imataka H."/>
            <person name="Mikami S."/>
            <person name="Martineau Y."/>
            <person name="Ronai Z.A."/>
            <person name="Sonenberg N."/>
        </authorList>
    </citation>
    <scope>FUNCTION</scope>
</reference>
<reference key="4">
    <citation type="journal article" date="2021" name="Elife">
        <title>ACLY ubiquitination by CUL3-KLHL25 induces the reprogramming of fatty acid metabolism to facilitate iTreg differentiation.</title>
        <authorList>
            <person name="Tian M."/>
            <person name="Hao F."/>
            <person name="Jin X."/>
            <person name="Sun X."/>
            <person name="Jiang Y."/>
            <person name="Wang Y."/>
            <person name="Li D."/>
            <person name="Chang T."/>
            <person name="Zou Y."/>
            <person name="Peng P."/>
            <person name="Xia C."/>
            <person name="Liu J."/>
            <person name="Li Y."/>
            <person name="Wang P."/>
            <person name="Feng Y."/>
            <person name="Wei M."/>
        </authorList>
    </citation>
    <scope>FUNCTION</scope>
    <scope>PATHWAY</scope>
    <scope>IDENTIFICATION IN A BCR (BTB-CUL3-RBX1) E3 UBIQUITIN LIGASE COMPLEX</scope>
</reference>
<gene>
    <name evidence="4 6" type="primary">Klhl25</name>
</gene>
<feature type="chain" id="PRO_0000272309" description="Kelch-like protein 25">
    <location>
        <begin position="1"/>
        <end position="589"/>
    </location>
</feature>
<feature type="domain" description="BTB" evidence="1">
    <location>
        <begin position="46"/>
        <end position="114"/>
    </location>
</feature>
<feature type="domain" description="BACK">
    <location>
        <begin position="149"/>
        <end position="250"/>
    </location>
</feature>
<feature type="repeat" description="Kelch 1">
    <location>
        <begin position="296"/>
        <end position="340"/>
    </location>
</feature>
<feature type="repeat" description="Kelch 2">
    <location>
        <begin position="341"/>
        <end position="388"/>
    </location>
</feature>
<feature type="repeat" description="Kelch 3">
    <location>
        <begin position="389"/>
        <end position="444"/>
    </location>
</feature>
<feature type="repeat" description="Kelch 4">
    <location>
        <begin position="446"/>
        <end position="492"/>
    </location>
</feature>
<feature type="repeat" description="Kelch 5">
    <location>
        <begin position="493"/>
        <end position="538"/>
    </location>
</feature>
<feature type="repeat" description="Kelch 6">
    <location>
        <begin position="539"/>
        <end position="585"/>
    </location>
</feature>
<organism>
    <name type="scientific">Mus musculus</name>
    <name type="common">Mouse</name>
    <dbReference type="NCBI Taxonomy" id="10090"/>
    <lineage>
        <taxon>Eukaryota</taxon>
        <taxon>Metazoa</taxon>
        <taxon>Chordata</taxon>
        <taxon>Craniata</taxon>
        <taxon>Vertebrata</taxon>
        <taxon>Euteleostomi</taxon>
        <taxon>Mammalia</taxon>
        <taxon>Eutheria</taxon>
        <taxon>Euarchontoglires</taxon>
        <taxon>Glires</taxon>
        <taxon>Rodentia</taxon>
        <taxon>Myomorpha</taxon>
        <taxon>Muroidea</taxon>
        <taxon>Muridae</taxon>
        <taxon>Murinae</taxon>
        <taxon>Mus</taxon>
        <taxon>Mus</taxon>
    </lineage>
</organism>
<evidence type="ECO:0000255" key="1">
    <source>
        <dbReference type="PROSITE-ProRule" id="PRU00037"/>
    </source>
</evidence>
<evidence type="ECO:0000269" key="2">
    <source>
    </source>
</evidence>
<evidence type="ECO:0000269" key="3">
    <source>
    </source>
</evidence>
<evidence type="ECO:0000303" key="4">
    <source>
    </source>
</evidence>
<evidence type="ECO:0000305" key="5"/>
<evidence type="ECO:0000312" key="6">
    <source>
        <dbReference type="MGI" id="MGI:2668031"/>
    </source>
</evidence>
<sequence length="589" mass="65826">MSVSVHETRKSRSSTGSMNISVFHKASHPDCVLAHLNTLRKHCMFTDVTLWAGDRAFPCHRAVLAASSRYFEAMFSHGLRESRDDTVNFQDNLHPEVLELLLDFAYSSRIVINEENAESLLEAGDMLQFHDVRDAAAEFLEKNLSPSNCLGMMVLSDAHQCRRLYEFSCRMSLVHFETVRQSEDFNSLSRDTLLDLISRDELETEDERVVFEAILQWVKHDLEQRKAHLPLLLRNVRLALLPSDCLKNAVSGEALLMADECTKLILDEAFRCKTKILLNDGVVTSPFARPRKAGHTLLILGGQTFMCDKIYQVDHKAKEIIPKADLPSPRKEFSASAIGCKVYVTGGRGSENGVSKDVWVYDTVHEEWSKAAPMLIARFGHGSAELENCLYVVGGHTSLAGIFPASPSVSLKQVEKYDPGDNKWTMVAPMRDGVSNAAVVSAKLKLFVFGGTSIHRDMVSKVQCFDPSENRWTIKAECPQPWRYTAAAVLGSQIFIMGGDTEYTAASAYRFDCETNQWTRIGDMTAKRMSCHAVASGNKLYVVGGYFGTQRCKTLDCYDPTSDTWNCITTVPYSLIPTAFVSTWKHLPA</sequence>
<proteinExistence type="evidence at protein level"/>
<comment type="function">
    <text evidence="2 3">Substrate-specific adapter of a BCR (BTB-CUL3-RBX1) E3 ubiquitin ligase complex involved in various processes, such as translation homeostasis and lipid synthesis (PubMed:22578813, PubMed:34491895). The BCR(KLHL25) ubiquitin ligase complex acts by mediating ubiquitination of hypophosphorylated EIF4EBP1 (4E-BP1): ubiquitination and subsequent degradation of hypophosphorylated EIF4EBP1 (4E-BP1) probably serves as a homeostatic mechanism to maintain translation and prevent eIF4E inhibition when eIF4E levels are low (PubMed:22578813). The BCR(KLHL25) complex does not target EIF4EBP1 (4E-BP1) when it is hyperphosphorylated or associated with eIF4E (PubMed:22578813). The BCR(KLHL25) complex also acts as a regulator of lipid synthesis by mediating ubiquitination and degradation of ACLY, thereby inhibiting lipid synthesis (PubMed:34491895). BCR(KLHL25)-mediated degradation of ACLY promotes fatty acid oxidation and is required for differentiation of inducible regulatory T (iTreg) cells (PubMed:34491895).</text>
</comment>
<comment type="pathway">
    <text evidence="3">Protein modification; protein ubiquitination.</text>
</comment>
<comment type="subunit">
    <text evidence="3">Component of the BCR(KLHL25) E3 ubiquitin ligase complex, at least composed of CUL3, KLHL25 and RBX1.</text>
</comment>
<dbReference type="EMBL" id="AK143086">
    <property type="protein sequence ID" value="BAE25266.1"/>
    <property type="molecule type" value="mRNA"/>
</dbReference>
<dbReference type="EMBL" id="BC027373">
    <property type="protein sequence ID" value="AAH27373.1"/>
    <property type="molecule type" value="mRNA"/>
</dbReference>
<dbReference type="CCDS" id="CCDS21369.1"/>
<dbReference type="RefSeq" id="NP_001116252.1">
    <property type="nucleotide sequence ID" value="NM_001122780.1"/>
</dbReference>
<dbReference type="RefSeq" id="NP_083928.1">
    <property type="nucleotide sequence ID" value="NM_029652.1"/>
</dbReference>
<dbReference type="RefSeq" id="NP_877583.1">
    <property type="nucleotide sequence ID" value="NM_182782.2"/>
</dbReference>
<dbReference type="RefSeq" id="XP_011249134.1">
    <property type="nucleotide sequence ID" value="XM_011250832.3"/>
</dbReference>
<dbReference type="SMR" id="Q8R2P1"/>
<dbReference type="FunCoup" id="Q8R2P1">
    <property type="interactions" value="23"/>
</dbReference>
<dbReference type="STRING" id="10090.ENSMUSP00000133175"/>
<dbReference type="iPTMnet" id="Q8R2P1"/>
<dbReference type="PhosphoSitePlus" id="Q8R2P1"/>
<dbReference type="PaxDb" id="10090-ENSMUSP00000089707"/>
<dbReference type="PeptideAtlas" id="Q8R2P1"/>
<dbReference type="ProteomicsDB" id="265001"/>
<dbReference type="Pumba" id="Q8R2P1"/>
<dbReference type="Antibodypedia" id="15613">
    <property type="antibodies" value="241 antibodies from 29 providers"/>
</dbReference>
<dbReference type="DNASU" id="207952"/>
<dbReference type="Ensembl" id="ENSMUST00000092073.11">
    <property type="protein sequence ID" value="ENSMUSP00000089707.6"/>
    <property type="gene ID" value="ENSMUSG00000055652.15"/>
</dbReference>
<dbReference type="Ensembl" id="ENSMUST00000171155.4">
    <property type="protein sequence ID" value="ENSMUSP00000133175.3"/>
    <property type="gene ID" value="ENSMUSG00000055652.15"/>
</dbReference>
<dbReference type="Ensembl" id="ENSMUST00000206019.2">
    <property type="protein sequence ID" value="ENSMUSP00000146102.2"/>
    <property type="gene ID" value="ENSMUSG00000055652.15"/>
</dbReference>
<dbReference type="GeneID" id="207952"/>
<dbReference type="KEGG" id="mmu:207952"/>
<dbReference type="UCSC" id="uc009hwy.2">
    <property type="organism name" value="mouse"/>
</dbReference>
<dbReference type="AGR" id="MGI:2668031"/>
<dbReference type="CTD" id="64410"/>
<dbReference type="MGI" id="MGI:2668031">
    <property type="gene designation" value="Klhl25"/>
</dbReference>
<dbReference type="VEuPathDB" id="HostDB:ENSMUSG00000055652"/>
<dbReference type="eggNOG" id="KOG4441">
    <property type="taxonomic scope" value="Eukaryota"/>
</dbReference>
<dbReference type="GeneTree" id="ENSGT00950000182983"/>
<dbReference type="HOGENOM" id="CLU_004253_14_6_1"/>
<dbReference type="InParanoid" id="Q8R2P1"/>
<dbReference type="OMA" id="SNCLAMM"/>
<dbReference type="OrthoDB" id="6359816at2759"/>
<dbReference type="PhylomeDB" id="Q8R2P1"/>
<dbReference type="TreeFam" id="TF329218"/>
<dbReference type="Reactome" id="R-MMU-8951664">
    <property type="pathway name" value="Neddylation"/>
</dbReference>
<dbReference type="Reactome" id="R-MMU-983168">
    <property type="pathway name" value="Antigen processing: Ubiquitination &amp; Proteasome degradation"/>
</dbReference>
<dbReference type="UniPathway" id="UPA00143"/>
<dbReference type="BioGRID-ORCS" id="207952">
    <property type="hits" value="3 hits in 79 CRISPR screens"/>
</dbReference>
<dbReference type="ChiTaRS" id="Klhl25">
    <property type="organism name" value="mouse"/>
</dbReference>
<dbReference type="PRO" id="PR:Q8R2P1"/>
<dbReference type="Proteomes" id="UP000000589">
    <property type="component" value="Chromosome 7"/>
</dbReference>
<dbReference type="RNAct" id="Q8R2P1">
    <property type="molecule type" value="protein"/>
</dbReference>
<dbReference type="Bgee" id="ENSMUSG00000055652">
    <property type="expression patterns" value="Expressed in cortical plate and 189 other cell types or tissues"/>
</dbReference>
<dbReference type="ExpressionAtlas" id="Q8R2P1">
    <property type="expression patterns" value="baseline and differential"/>
</dbReference>
<dbReference type="GO" id="GO:0031463">
    <property type="term" value="C:Cul3-RING ubiquitin ligase complex"/>
    <property type="evidence" value="ECO:0000314"/>
    <property type="project" value="UniProtKB"/>
</dbReference>
<dbReference type="GO" id="GO:0005737">
    <property type="term" value="C:cytoplasm"/>
    <property type="evidence" value="ECO:0007669"/>
    <property type="project" value="Ensembl"/>
</dbReference>
<dbReference type="GO" id="GO:1990756">
    <property type="term" value="F:ubiquitin-like ligase-substrate adaptor activity"/>
    <property type="evidence" value="ECO:0000314"/>
    <property type="project" value="UniProtKB"/>
</dbReference>
<dbReference type="GO" id="GO:0045717">
    <property type="term" value="P:negative regulation of fatty acid biosynthetic process"/>
    <property type="evidence" value="ECO:0007669"/>
    <property type="project" value="Ensembl"/>
</dbReference>
<dbReference type="GO" id="GO:0032831">
    <property type="term" value="P:positive regulation of CD4-positive, CD25-positive, alpha-beta regulatory T cell differentiation"/>
    <property type="evidence" value="ECO:0000314"/>
    <property type="project" value="UniProtKB"/>
</dbReference>
<dbReference type="GO" id="GO:0046321">
    <property type="term" value="P:positive regulation of fatty acid oxidation"/>
    <property type="evidence" value="ECO:0000314"/>
    <property type="project" value="UniProtKB"/>
</dbReference>
<dbReference type="GO" id="GO:0016567">
    <property type="term" value="P:protein ubiquitination"/>
    <property type="evidence" value="ECO:0000250"/>
    <property type="project" value="UniProtKB"/>
</dbReference>
<dbReference type="GO" id="GO:0006446">
    <property type="term" value="P:regulation of translational initiation"/>
    <property type="evidence" value="ECO:0000250"/>
    <property type="project" value="UniProtKB"/>
</dbReference>
<dbReference type="GO" id="GO:0006511">
    <property type="term" value="P:ubiquitin-dependent protein catabolic process"/>
    <property type="evidence" value="ECO:0000314"/>
    <property type="project" value="UniProtKB"/>
</dbReference>
<dbReference type="CDD" id="cd18254">
    <property type="entry name" value="BTB_POZ_KLHL25"/>
    <property type="match status" value="1"/>
</dbReference>
<dbReference type="FunFam" id="2.120.10.80:FF:000003">
    <property type="entry name" value="Ectoderm-neural cortex protein 1"/>
    <property type="match status" value="1"/>
</dbReference>
<dbReference type="FunFam" id="2.120.10.80:FF:000004">
    <property type="entry name" value="Ectoderm-neural cortex protein 1"/>
    <property type="match status" value="1"/>
</dbReference>
<dbReference type="FunFam" id="3.30.710.10:FF:000023">
    <property type="entry name" value="Ectoderm-neural cortex protein 1"/>
    <property type="match status" value="1"/>
</dbReference>
<dbReference type="FunFam" id="1.25.40.420:FF:000001">
    <property type="entry name" value="Kelch-like family member 12"/>
    <property type="match status" value="1"/>
</dbReference>
<dbReference type="Gene3D" id="1.25.40.420">
    <property type="match status" value="1"/>
</dbReference>
<dbReference type="Gene3D" id="2.120.10.80">
    <property type="entry name" value="Kelch-type beta propeller"/>
    <property type="match status" value="1"/>
</dbReference>
<dbReference type="Gene3D" id="3.30.710.10">
    <property type="entry name" value="Potassium Channel Kv1.1, Chain A"/>
    <property type="match status" value="1"/>
</dbReference>
<dbReference type="InterPro" id="IPR011705">
    <property type="entry name" value="BACK"/>
</dbReference>
<dbReference type="InterPro" id="IPR017096">
    <property type="entry name" value="BTB-kelch_protein"/>
</dbReference>
<dbReference type="InterPro" id="IPR000210">
    <property type="entry name" value="BTB/POZ_dom"/>
</dbReference>
<dbReference type="InterPro" id="IPR015915">
    <property type="entry name" value="Kelch-typ_b-propeller"/>
</dbReference>
<dbReference type="InterPro" id="IPR006652">
    <property type="entry name" value="Kelch_1"/>
</dbReference>
<dbReference type="InterPro" id="IPR030565">
    <property type="entry name" value="KLHL25_BTB_POZ_dom"/>
</dbReference>
<dbReference type="InterPro" id="IPR011333">
    <property type="entry name" value="SKP1/BTB/POZ_sf"/>
</dbReference>
<dbReference type="PANTHER" id="PTHR24412">
    <property type="entry name" value="KELCH PROTEIN"/>
    <property type="match status" value="1"/>
</dbReference>
<dbReference type="PANTHER" id="PTHR24412:SF487">
    <property type="entry name" value="KELCH-LIKE PROTEIN 25"/>
    <property type="match status" value="1"/>
</dbReference>
<dbReference type="Pfam" id="PF07707">
    <property type="entry name" value="BACK"/>
    <property type="match status" value="1"/>
</dbReference>
<dbReference type="Pfam" id="PF00651">
    <property type="entry name" value="BTB"/>
    <property type="match status" value="1"/>
</dbReference>
<dbReference type="Pfam" id="PF01344">
    <property type="entry name" value="Kelch_1"/>
    <property type="match status" value="1"/>
</dbReference>
<dbReference type="Pfam" id="PF24681">
    <property type="entry name" value="Kelch_KLHDC2_KLHL20_DRC7"/>
    <property type="match status" value="1"/>
</dbReference>
<dbReference type="PIRSF" id="PIRSF037037">
    <property type="entry name" value="Kelch-like_protein_gigaxonin"/>
    <property type="match status" value="1"/>
</dbReference>
<dbReference type="SMART" id="SM00875">
    <property type="entry name" value="BACK"/>
    <property type="match status" value="1"/>
</dbReference>
<dbReference type="SMART" id="SM00225">
    <property type="entry name" value="BTB"/>
    <property type="match status" value="1"/>
</dbReference>
<dbReference type="SMART" id="SM00612">
    <property type="entry name" value="Kelch"/>
    <property type="match status" value="6"/>
</dbReference>
<dbReference type="SUPFAM" id="SSF117281">
    <property type="entry name" value="Kelch motif"/>
    <property type="match status" value="1"/>
</dbReference>
<dbReference type="SUPFAM" id="SSF54695">
    <property type="entry name" value="POZ domain"/>
    <property type="match status" value="1"/>
</dbReference>
<dbReference type="PROSITE" id="PS50097">
    <property type="entry name" value="BTB"/>
    <property type="match status" value="1"/>
</dbReference>
<protein>
    <recommendedName>
        <fullName evidence="5">Kelch-like protein 25</fullName>
    </recommendedName>
</protein>